<feature type="chain" id="PRO_0000067939" description="DNA-directed RNA polymerase subunit beta''">
    <location>
        <begin position="1" status="less than"/>
        <end position="1163"/>
    </location>
</feature>
<feature type="binding site" evidence="2">
    <location>
        <position position="16"/>
    </location>
    <ligand>
        <name>Zn(2+)</name>
        <dbReference type="ChEBI" id="CHEBI:29105"/>
    </ligand>
</feature>
<feature type="binding site" evidence="2">
    <location>
        <position position="87"/>
    </location>
    <ligand>
        <name>Zn(2+)</name>
        <dbReference type="ChEBI" id="CHEBI:29105"/>
    </ligand>
</feature>
<feature type="binding site" evidence="2">
    <location>
        <position position="94"/>
    </location>
    <ligand>
        <name>Zn(2+)</name>
        <dbReference type="ChEBI" id="CHEBI:29105"/>
    </ligand>
</feature>
<feature type="binding site" evidence="2">
    <location>
        <position position="97"/>
    </location>
    <ligand>
        <name>Zn(2+)</name>
        <dbReference type="ChEBI" id="CHEBI:29105"/>
    </ligand>
</feature>
<feature type="non-terminal residue">
    <location>
        <position position="1"/>
    </location>
</feature>
<protein>
    <recommendedName>
        <fullName>DNA-directed RNA polymerase subunit beta''</fullName>
        <ecNumber>2.7.7.6</ecNumber>
    </recommendedName>
    <alternativeName>
        <fullName>PEP</fullName>
    </alternativeName>
    <alternativeName>
        <fullName>Plastid-encoded RNA polymerase subunit beta''</fullName>
        <shortName>RNA polymerase subunit beta''</shortName>
    </alternativeName>
</protein>
<evidence type="ECO:0000250" key="1"/>
<evidence type="ECO:0000250" key="2">
    <source>
        <dbReference type="UniProtKB" id="P0A8T7"/>
    </source>
</evidence>
<evidence type="ECO:0000305" key="3"/>
<geneLocation type="chloroplast"/>
<accession>P12227</accession>
<organism>
    <name type="scientific">Pisum sativum</name>
    <name type="common">Garden pea</name>
    <name type="synonym">Lathyrus oleraceus</name>
    <dbReference type="NCBI Taxonomy" id="3888"/>
    <lineage>
        <taxon>Eukaryota</taxon>
        <taxon>Viridiplantae</taxon>
        <taxon>Streptophyta</taxon>
        <taxon>Embryophyta</taxon>
        <taxon>Tracheophyta</taxon>
        <taxon>Spermatophyta</taxon>
        <taxon>Magnoliopsida</taxon>
        <taxon>eudicotyledons</taxon>
        <taxon>Gunneridae</taxon>
        <taxon>Pentapetalae</taxon>
        <taxon>rosids</taxon>
        <taxon>fabids</taxon>
        <taxon>Fabales</taxon>
        <taxon>Fabaceae</taxon>
        <taxon>Papilionoideae</taxon>
        <taxon>50 kb inversion clade</taxon>
        <taxon>NPAAA clade</taxon>
        <taxon>Hologalegina</taxon>
        <taxon>IRL clade</taxon>
        <taxon>Fabeae</taxon>
        <taxon>Pisum</taxon>
    </lineage>
</organism>
<dbReference type="EC" id="2.7.7.6"/>
<dbReference type="EMBL" id="X03912">
    <property type="protein sequence ID" value="CAA27545.1"/>
    <property type="molecule type" value="Genomic_DNA"/>
</dbReference>
<dbReference type="PIR" id="S07137">
    <property type="entry name" value="S07137"/>
</dbReference>
<dbReference type="SMR" id="P12227"/>
<dbReference type="GO" id="GO:0009507">
    <property type="term" value="C:chloroplast"/>
    <property type="evidence" value="ECO:0007669"/>
    <property type="project" value="UniProtKB-SubCell"/>
</dbReference>
<dbReference type="GO" id="GO:0000428">
    <property type="term" value="C:DNA-directed RNA polymerase complex"/>
    <property type="evidence" value="ECO:0007669"/>
    <property type="project" value="UniProtKB-KW"/>
</dbReference>
<dbReference type="GO" id="GO:0005739">
    <property type="term" value="C:mitochondrion"/>
    <property type="evidence" value="ECO:0007669"/>
    <property type="project" value="GOC"/>
</dbReference>
<dbReference type="GO" id="GO:0003677">
    <property type="term" value="F:DNA binding"/>
    <property type="evidence" value="ECO:0007669"/>
    <property type="project" value="InterPro"/>
</dbReference>
<dbReference type="GO" id="GO:0003899">
    <property type="term" value="F:DNA-directed RNA polymerase activity"/>
    <property type="evidence" value="ECO:0007669"/>
    <property type="project" value="UniProtKB-EC"/>
</dbReference>
<dbReference type="GO" id="GO:0046872">
    <property type="term" value="F:metal ion binding"/>
    <property type="evidence" value="ECO:0007669"/>
    <property type="project" value="UniProtKB-KW"/>
</dbReference>
<dbReference type="GO" id="GO:0006351">
    <property type="term" value="P:DNA-templated transcription"/>
    <property type="evidence" value="ECO:0007669"/>
    <property type="project" value="InterPro"/>
</dbReference>
<dbReference type="CDD" id="cd02655">
    <property type="entry name" value="RNAP_beta'_C"/>
    <property type="match status" value="1"/>
</dbReference>
<dbReference type="Gene3D" id="1.10.150.390">
    <property type="match status" value="1"/>
</dbReference>
<dbReference type="Gene3D" id="1.10.1790.20">
    <property type="match status" value="1"/>
</dbReference>
<dbReference type="InterPro" id="IPR050254">
    <property type="entry name" value="RNA_pol_beta''_euk"/>
</dbReference>
<dbReference type="InterPro" id="IPR007081">
    <property type="entry name" value="RNA_pol_Rpb1_5"/>
</dbReference>
<dbReference type="PANTHER" id="PTHR34995">
    <property type="entry name" value="DNA-DIRECTED RNA POLYMERASE SUBUNIT BETA"/>
    <property type="match status" value="1"/>
</dbReference>
<dbReference type="PANTHER" id="PTHR34995:SF1">
    <property type="entry name" value="DNA-DIRECTED RNA POLYMERASE SUBUNIT BETA"/>
    <property type="match status" value="1"/>
</dbReference>
<dbReference type="Pfam" id="PF04998">
    <property type="entry name" value="RNA_pol_Rpb1_5"/>
    <property type="match status" value="2"/>
</dbReference>
<dbReference type="SUPFAM" id="SSF64484">
    <property type="entry name" value="beta and beta-prime subunits of DNA dependent RNA-polymerase"/>
    <property type="match status" value="1"/>
</dbReference>
<name>RPOC2_PEA</name>
<reference key="1">
    <citation type="journal article" date="1986" name="Biochem. J.">
        <title>Pea chloroplast DNA encodes homologues of Escherichia coli ribosomal subunit S2 and the beta'-subunit of RNA polymerase.</title>
        <authorList>
            <person name="Cozens A.L."/>
            <person name="Walker J.E."/>
        </authorList>
    </citation>
    <scope>NUCLEOTIDE SEQUENCE [GENOMIC DNA]</scope>
</reference>
<proteinExistence type="inferred from homology"/>
<comment type="function">
    <text evidence="1">DNA-dependent RNA polymerase catalyzes the transcription of DNA into RNA using the four ribonucleoside triphosphates as substrates.</text>
</comment>
<comment type="catalytic activity">
    <reaction evidence="2">
        <text>RNA(n) + a ribonucleoside 5'-triphosphate = RNA(n+1) + diphosphate</text>
        <dbReference type="Rhea" id="RHEA:21248"/>
        <dbReference type="Rhea" id="RHEA-COMP:14527"/>
        <dbReference type="Rhea" id="RHEA-COMP:17342"/>
        <dbReference type="ChEBI" id="CHEBI:33019"/>
        <dbReference type="ChEBI" id="CHEBI:61557"/>
        <dbReference type="ChEBI" id="CHEBI:140395"/>
        <dbReference type="EC" id="2.7.7.6"/>
    </reaction>
</comment>
<comment type="cofactor">
    <cofactor evidence="2">
        <name>Zn(2+)</name>
        <dbReference type="ChEBI" id="CHEBI:29105"/>
    </cofactor>
    <text evidence="2">Binds 1 Zn(2+) ion per subunit.</text>
</comment>
<comment type="subunit">
    <text evidence="1">In plastids the minimal PEP RNA polymerase catalytic core is composed of four subunits: alpha, beta, beta', and beta''. When a (nuclear-encoded) sigma factor is associated with the core the holoenzyme is formed, which can initiate transcription (By similarity).</text>
</comment>
<comment type="subcellular location">
    <subcellularLocation>
        <location>Plastid</location>
        <location>Chloroplast</location>
    </subcellularLocation>
</comment>
<comment type="similarity">
    <text evidence="3">Belongs to the RNA polymerase beta' chain family. RpoC2 subfamily.</text>
</comment>
<gene>
    <name type="primary">rpoC2</name>
</gene>
<keyword id="KW-0150">Chloroplast</keyword>
<keyword id="KW-0240">DNA-directed RNA polymerase</keyword>
<keyword id="KW-0479">Metal-binding</keyword>
<keyword id="KW-0548">Nucleotidyltransferase</keyword>
<keyword id="KW-0934">Plastid</keyword>
<keyword id="KW-0804">Transcription</keyword>
<keyword id="KW-0808">Transferase</keyword>
<keyword id="KW-0862">Zinc</keyword>
<sequence length="1163" mass="133599">RLVEVVQHIVVRRTDCGTIRGISVNTRNGMMPEIILIQTLIGRVVAENIYIGSRCIVVRNQDIGIGLINRFITFQTQPIFIRTPFTCRNTSWICRLCYGRSPIHGDLVELGEAVGIIAGQSIGEPGTQLTLRTFHTGGVFTGGTAEYVRAPSNGKIKLNEDLVHPTRTRHGYPAFICNIDLYVTIESDDIIHNVIIPPKSFLLVQNDQYVKSEQVIAEIRAGTYTFNLKERVRKHIYSDSEGEMHWSTDVYHASEFMYSNVHILPKTSHLWILSGKSCRSNTIHFLLRKDQDQITMDSLSNGKTNISNLLERNDQVKHKLFRFNTFGTKEKGISDYSIFNEIICTDHSYPAIFHDTFYFLAKRRRNRFLIPFPFQSIQERKNERMSPSGVSIEIPINGIFHRNSIFAYFDDPQYRRHSSGITKYRTIGIHSIFQKEDFIEYRGIKELKPKSQIQVDRFFFIPEEVHILPKSSSLMVRNNSLVGIGTPITFNIRSRVGGLVRLDKKKKKIELKIFSGNIHFPGEMDKISRHSAILIPPGTVKKKKCNKSKKIKNWIYVQWIATTKKKYFVLVRPVILYEIPDSNNFVKLFPQDLFQEKDNLELKVVNYILYGNGKSIRGISDTRIQLVRTCLVFNWDDGKNSSSIEEAPASFIEVRTNGLIEYFLRIDLVKSNTSYIRKRNEPSGFGLIGDNKSDRINPFFSIHSKGKIQQSLSQNHGTIRMLLNRNKECRSWIILSSSNCFQMRPFNNEKSHNGIKKDPIISINNNGPLGIALQVANFYSLYHLITHNQISIIKNLQLDKLTEIFQVIKYYLMDENDKICKPDLYSNIILNPFHLNWFFLHHFYCEKTFTRISLGQFICENICIAQMKNRPHLKLKSGQVIIVQMDSVIIRSANPYLATPGATIHGHYGEILSQGDILVTFIYEKSRSGDITQGLPKVEQILEIRSIDSISMNLEKRIDAWNECITKIIGIPWGFLIGAELTIAQSRISLVNKIQKVYRSQGVHIHNRHIEIIVRQITSKVLVSEDGMSNIFLPGELIGLLRAERTGRALEEAICYRALLLGVTKTSLNTQSFISEASFQETARVLAKAALRGRIDWLKGLKENVVLGGMIPVGTGFKRIMHRSRSRQHNKITRKKKLFEVEIRNLLFHHRKLLDFANFKEFM</sequence>